<organism>
    <name type="scientific">Brucella melitensis biotype 2 (strain ATCC 23457)</name>
    <dbReference type="NCBI Taxonomy" id="546272"/>
    <lineage>
        <taxon>Bacteria</taxon>
        <taxon>Pseudomonadati</taxon>
        <taxon>Pseudomonadota</taxon>
        <taxon>Alphaproteobacteria</taxon>
        <taxon>Hyphomicrobiales</taxon>
        <taxon>Brucellaceae</taxon>
        <taxon>Brucella/Ochrobactrum group</taxon>
        <taxon>Brucella</taxon>
    </lineage>
</organism>
<protein>
    <recommendedName>
        <fullName evidence="1">ATP-dependent protease subunit HslV</fullName>
        <ecNumber evidence="1">3.4.25.2</ecNumber>
    </recommendedName>
</protein>
<name>HSLV_BRUMB</name>
<reference key="1">
    <citation type="submission" date="2009-03" db="EMBL/GenBank/DDBJ databases">
        <title>Brucella melitensis ATCC 23457 whole genome shotgun sequencing project.</title>
        <authorList>
            <person name="Setubal J.C."/>
            <person name="Boyle S."/>
            <person name="Crasta O.R."/>
            <person name="Gillespie J.J."/>
            <person name="Kenyon R.W."/>
            <person name="Lu J."/>
            <person name="Mane S."/>
            <person name="Nagrani S."/>
            <person name="Shallom J.M."/>
            <person name="Shallom S."/>
            <person name="Shukla M."/>
            <person name="Snyder E.E."/>
            <person name="Sobral B.W."/>
            <person name="Wattam A.R."/>
            <person name="Will R."/>
            <person name="Williams K."/>
            <person name="Yoo H."/>
            <person name="Munk C."/>
            <person name="Tapia R."/>
            <person name="Han C."/>
            <person name="Detter J.C."/>
            <person name="Bruce D."/>
            <person name="Brettin T.S."/>
        </authorList>
    </citation>
    <scope>NUCLEOTIDE SEQUENCE [LARGE SCALE GENOMIC DNA]</scope>
    <source>
        <strain>ATCC 23457</strain>
    </source>
</reference>
<feature type="chain" id="PRO_1000125401" description="ATP-dependent protease subunit HslV">
    <location>
        <begin position="1"/>
        <end position="184"/>
    </location>
</feature>
<feature type="active site" evidence="1">
    <location>
        <position position="12"/>
    </location>
</feature>
<feature type="binding site" evidence="1">
    <location>
        <position position="166"/>
    </location>
    <ligand>
        <name>Na(+)</name>
        <dbReference type="ChEBI" id="CHEBI:29101"/>
    </ligand>
</feature>
<feature type="binding site" evidence="1">
    <location>
        <position position="169"/>
    </location>
    <ligand>
        <name>Na(+)</name>
        <dbReference type="ChEBI" id="CHEBI:29101"/>
    </ligand>
</feature>
<feature type="binding site" evidence="1">
    <location>
        <position position="172"/>
    </location>
    <ligand>
        <name>Na(+)</name>
        <dbReference type="ChEBI" id="CHEBI:29101"/>
    </ligand>
</feature>
<comment type="function">
    <text evidence="1">Protease subunit of a proteasome-like degradation complex believed to be a general protein degrading machinery.</text>
</comment>
<comment type="catalytic activity">
    <reaction evidence="1">
        <text>ATP-dependent cleavage of peptide bonds with broad specificity.</text>
        <dbReference type="EC" id="3.4.25.2"/>
    </reaction>
</comment>
<comment type="activity regulation">
    <text evidence="1">Allosterically activated by HslU binding.</text>
</comment>
<comment type="subunit">
    <text evidence="1">A double ring-shaped homohexamer of HslV is capped on each side by a ring-shaped HslU homohexamer. The assembly of the HslU/HslV complex is dependent on binding of ATP.</text>
</comment>
<comment type="subcellular location">
    <subcellularLocation>
        <location evidence="1">Cytoplasm</location>
    </subcellularLocation>
</comment>
<comment type="similarity">
    <text evidence="1">Belongs to the peptidase T1B family. HslV subfamily.</text>
</comment>
<gene>
    <name evidence="1" type="primary">hslV</name>
    <name type="ordered locus">BMEA_A2142</name>
</gene>
<accession>C0RFW8</accession>
<keyword id="KW-0021">Allosteric enzyme</keyword>
<keyword id="KW-0963">Cytoplasm</keyword>
<keyword id="KW-0378">Hydrolase</keyword>
<keyword id="KW-0479">Metal-binding</keyword>
<keyword id="KW-0645">Protease</keyword>
<keyword id="KW-0915">Sodium</keyword>
<keyword id="KW-0888">Threonine protease</keyword>
<evidence type="ECO:0000255" key="1">
    <source>
        <dbReference type="HAMAP-Rule" id="MF_00248"/>
    </source>
</evidence>
<sequence length="184" mass="19809">MIEHNPTTIYGTTIVTVRKDGKVVIAGDGQVSLGNTVMKGNARKVRRIGKGNVIAGFAGATADAFTLLERLEAKLEQYPDQLMRASVELAKDWRTDRYLRKLEAMMLVADSKVTLALTGTGDVLEPEQGVMAIGSGGNYALAAARALIETDKSAEEIARKAMNIAADICIYTNHNIIVESLDAQ</sequence>
<proteinExistence type="inferred from homology"/>
<dbReference type="EC" id="3.4.25.2" evidence="1"/>
<dbReference type="EMBL" id="CP001488">
    <property type="protein sequence ID" value="ACO01790.1"/>
    <property type="molecule type" value="Genomic_DNA"/>
</dbReference>
<dbReference type="RefSeq" id="WP_002965144.1">
    <property type="nucleotide sequence ID" value="NC_012441.1"/>
</dbReference>
<dbReference type="SMR" id="C0RFW8"/>
<dbReference type="GeneID" id="55591650"/>
<dbReference type="KEGG" id="bmi:BMEA_A2142"/>
<dbReference type="HOGENOM" id="CLU_093872_1_0_5"/>
<dbReference type="Proteomes" id="UP000001748">
    <property type="component" value="Chromosome I"/>
</dbReference>
<dbReference type="GO" id="GO:0009376">
    <property type="term" value="C:HslUV protease complex"/>
    <property type="evidence" value="ECO:0007669"/>
    <property type="project" value="UniProtKB-UniRule"/>
</dbReference>
<dbReference type="GO" id="GO:0005839">
    <property type="term" value="C:proteasome core complex"/>
    <property type="evidence" value="ECO:0007669"/>
    <property type="project" value="InterPro"/>
</dbReference>
<dbReference type="GO" id="GO:0046872">
    <property type="term" value="F:metal ion binding"/>
    <property type="evidence" value="ECO:0007669"/>
    <property type="project" value="UniProtKB-KW"/>
</dbReference>
<dbReference type="GO" id="GO:0004298">
    <property type="term" value="F:threonine-type endopeptidase activity"/>
    <property type="evidence" value="ECO:0007669"/>
    <property type="project" value="UniProtKB-KW"/>
</dbReference>
<dbReference type="GO" id="GO:0051603">
    <property type="term" value="P:proteolysis involved in protein catabolic process"/>
    <property type="evidence" value="ECO:0007669"/>
    <property type="project" value="InterPro"/>
</dbReference>
<dbReference type="CDD" id="cd01913">
    <property type="entry name" value="protease_HslV"/>
    <property type="match status" value="1"/>
</dbReference>
<dbReference type="FunFam" id="3.60.20.10:FF:000002">
    <property type="entry name" value="ATP-dependent protease subunit HslV"/>
    <property type="match status" value="1"/>
</dbReference>
<dbReference type="Gene3D" id="3.60.20.10">
    <property type="entry name" value="Glutamine Phosphoribosylpyrophosphate, subunit 1, domain 1"/>
    <property type="match status" value="1"/>
</dbReference>
<dbReference type="HAMAP" id="MF_00248">
    <property type="entry name" value="HslV"/>
    <property type="match status" value="1"/>
</dbReference>
<dbReference type="InterPro" id="IPR022281">
    <property type="entry name" value="ATP-dep_Prtase_HsIV_su"/>
</dbReference>
<dbReference type="InterPro" id="IPR029055">
    <property type="entry name" value="Ntn_hydrolases_N"/>
</dbReference>
<dbReference type="InterPro" id="IPR001353">
    <property type="entry name" value="Proteasome_sua/b"/>
</dbReference>
<dbReference type="InterPro" id="IPR023333">
    <property type="entry name" value="Proteasome_suB-type"/>
</dbReference>
<dbReference type="NCBIfam" id="TIGR03692">
    <property type="entry name" value="ATP_dep_HslV"/>
    <property type="match status" value="1"/>
</dbReference>
<dbReference type="NCBIfam" id="NF003964">
    <property type="entry name" value="PRK05456.1"/>
    <property type="match status" value="1"/>
</dbReference>
<dbReference type="PANTHER" id="PTHR32194:SF7">
    <property type="entry name" value="ATP-DEPENDENT PROTEASE SUBUNIT HSLV"/>
    <property type="match status" value="1"/>
</dbReference>
<dbReference type="PANTHER" id="PTHR32194">
    <property type="entry name" value="METALLOPROTEASE TLDD"/>
    <property type="match status" value="1"/>
</dbReference>
<dbReference type="Pfam" id="PF00227">
    <property type="entry name" value="Proteasome"/>
    <property type="match status" value="1"/>
</dbReference>
<dbReference type="PIRSF" id="PIRSF039093">
    <property type="entry name" value="HslV"/>
    <property type="match status" value="1"/>
</dbReference>
<dbReference type="SUPFAM" id="SSF56235">
    <property type="entry name" value="N-terminal nucleophile aminohydrolases (Ntn hydrolases)"/>
    <property type="match status" value="1"/>
</dbReference>
<dbReference type="PROSITE" id="PS51476">
    <property type="entry name" value="PROTEASOME_BETA_2"/>
    <property type="match status" value="1"/>
</dbReference>